<evidence type="ECO:0000255" key="1">
    <source>
        <dbReference type="HAMAP-Rule" id="MF_00011"/>
    </source>
</evidence>
<protein>
    <recommendedName>
        <fullName evidence="1">Adenylosuccinate synthetase</fullName>
        <shortName evidence="1">AMPSase</shortName>
        <shortName evidence="1">AdSS</shortName>
        <ecNumber evidence="1">6.3.4.4</ecNumber>
    </recommendedName>
    <alternativeName>
        <fullName evidence="1">IMP--aspartate ligase</fullName>
    </alternativeName>
</protein>
<accession>Q66FB0</accession>
<comment type="function">
    <text evidence="1">Plays an important role in the de novo pathway of purine nucleotide biosynthesis. Catalyzes the first committed step in the biosynthesis of AMP from IMP.</text>
</comment>
<comment type="catalytic activity">
    <reaction evidence="1">
        <text>IMP + L-aspartate + GTP = N(6)-(1,2-dicarboxyethyl)-AMP + GDP + phosphate + 2 H(+)</text>
        <dbReference type="Rhea" id="RHEA:15753"/>
        <dbReference type="ChEBI" id="CHEBI:15378"/>
        <dbReference type="ChEBI" id="CHEBI:29991"/>
        <dbReference type="ChEBI" id="CHEBI:37565"/>
        <dbReference type="ChEBI" id="CHEBI:43474"/>
        <dbReference type="ChEBI" id="CHEBI:57567"/>
        <dbReference type="ChEBI" id="CHEBI:58053"/>
        <dbReference type="ChEBI" id="CHEBI:58189"/>
        <dbReference type="EC" id="6.3.4.4"/>
    </reaction>
</comment>
<comment type="cofactor">
    <cofactor evidence="1">
        <name>Mg(2+)</name>
        <dbReference type="ChEBI" id="CHEBI:18420"/>
    </cofactor>
    <text evidence="1">Binds 1 Mg(2+) ion per subunit.</text>
</comment>
<comment type="pathway">
    <text evidence="1">Purine metabolism; AMP biosynthesis via de novo pathway; AMP from IMP: step 1/2.</text>
</comment>
<comment type="subunit">
    <text evidence="1">Homodimer.</text>
</comment>
<comment type="subcellular location">
    <subcellularLocation>
        <location evidence="1">Cytoplasm</location>
    </subcellularLocation>
</comment>
<comment type="similarity">
    <text evidence="1">Belongs to the adenylosuccinate synthetase family.</text>
</comment>
<sequence length="432" mass="47278">MGKNVVVLGTQWGDEGKGKVVDLLTERAKYVVRYQGGHNAGHTLVINGEKTVLHLIPSGILRENVISIIGNGVVLAPDALMKEMTELEARGVPVRERLLLSEACPLILPYHVALDNAREKARGAKAIGTTGRGIGPAYEDKVARRGLRVSDLFNKETFAIKLKEIVEYHNFQLVHYYKEAAVDYQKVLDDVLAIADILTAMVVDVSELLDNARKQGELIMFEGAQGTLLDIDHGTYPYVTSSNTTAGGVATGSGLGPRYVDYVLGIVKAYSTRVGAGPFPTELNDETGEFLRKQGNEYGATTGRSRRTGWLDIVAVRRAVQINSLSGFCMTKLDVLDGLKEVKLCVGYRMPDGREVDTTPLAAEGWEGIEPIYETMPGWSETTFGVKEHSKLPQAALNYIQRVEELTGVPIDIISTGPDRDETMILRDPFDA</sequence>
<gene>
    <name evidence="1" type="primary">purA</name>
    <name type="ordered locus">YPTB0430</name>
</gene>
<feature type="chain" id="PRO_0000224338" description="Adenylosuccinate synthetase">
    <location>
        <begin position="1"/>
        <end position="432"/>
    </location>
</feature>
<feature type="active site" description="Proton acceptor" evidence="1">
    <location>
        <position position="14"/>
    </location>
</feature>
<feature type="active site" description="Proton donor" evidence="1">
    <location>
        <position position="42"/>
    </location>
</feature>
<feature type="binding site" evidence="1">
    <location>
        <begin position="13"/>
        <end position="19"/>
    </location>
    <ligand>
        <name>GTP</name>
        <dbReference type="ChEBI" id="CHEBI:37565"/>
    </ligand>
</feature>
<feature type="binding site" description="in other chain" evidence="1">
    <location>
        <begin position="14"/>
        <end position="17"/>
    </location>
    <ligand>
        <name>IMP</name>
        <dbReference type="ChEBI" id="CHEBI:58053"/>
        <note>ligand shared between dimeric partners</note>
    </ligand>
</feature>
<feature type="binding site" evidence="1">
    <location>
        <position position="14"/>
    </location>
    <ligand>
        <name>Mg(2+)</name>
        <dbReference type="ChEBI" id="CHEBI:18420"/>
    </ligand>
</feature>
<feature type="binding site" description="in other chain" evidence="1">
    <location>
        <begin position="39"/>
        <end position="42"/>
    </location>
    <ligand>
        <name>IMP</name>
        <dbReference type="ChEBI" id="CHEBI:58053"/>
        <note>ligand shared between dimeric partners</note>
    </ligand>
</feature>
<feature type="binding site" evidence="1">
    <location>
        <begin position="41"/>
        <end position="43"/>
    </location>
    <ligand>
        <name>GTP</name>
        <dbReference type="ChEBI" id="CHEBI:37565"/>
    </ligand>
</feature>
<feature type="binding site" evidence="1">
    <location>
        <position position="41"/>
    </location>
    <ligand>
        <name>Mg(2+)</name>
        <dbReference type="ChEBI" id="CHEBI:18420"/>
    </ligand>
</feature>
<feature type="binding site" description="in other chain" evidence="1">
    <location>
        <position position="130"/>
    </location>
    <ligand>
        <name>IMP</name>
        <dbReference type="ChEBI" id="CHEBI:58053"/>
        <note>ligand shared between dimeric partners</note>
    </ligand>
</feature>
<feature type="binding site" evidence="1">
    <location>
        <position position="144"/>
    </location>
    <ligand>
        <name>IMP</name>
        <dbReference type="ChEBI" id="CHEBI:58053"/>
        <note>ligand shared between dimeric partners</note>
    </ligand>
</feature>
<feature type="binding site" description="in other chain" evidence="1">
    <location>
        <position position="225"/>
    </location>
    <ligand>
        <name>IMP</name>
        <dbReference type="ChEBI" id="CHEBI:58053"/>
        <note>ligand shared between dimeric partners</note>
    </ligand>
</feature>
<feature type="binding site" description="in other chain" evidence="1">
    <location>
        <position position="240"/>
    </location>
    <ligand>
        <name>IMP</name>
        <dbReference type="ChEBI" id="CHEBI:58053"/>
        <note>ligand shared between dimeric partners</note>
    </ligand>
</feature>
<feature type="binding site" evidence="1">
    <location>
        <begin position="300"/>
        <end position="306"/>
    </location>
    <ligand>
        <name>substrate</name>
    </ligand>
</feature>
<feature type="binding site" description="in other chain" evidence="1">
    <location>
        <position position="304"/>
    </location>
    <ligand>
        <name>IMP</name>
        <dbReference type="ChEBI" id="CHEBI:58053"/>
        <note>ligand shared between dimeric partners</note>
    </ligand>
</feature>
<feature type="binding site" evidence="1">
    <location>
        <position position="306"/>
    </location>
    <ligand>
        <name>GTP</name>
        <dbReference type="ChEBI" id="CHEBI:37565"/>
    </ligand>
</feature>
<feature type="binding site" evidence="1">
    <location>
        <begin position="332"/>
        <end position="334"/>
    </location>
    <ligand>
        <name>GTP</name>
        <dbReference type="ChEBI" id="CHEBI:37565"/>
    </ligand>
</feature>
<feature type="binding site" evidence="1">
    <location>
        <begin position="415"/>
        <end position="417"/>
    </location>
    <ligand>
        <name>GTP</name>
        <dbReference type="ChEBI" id="CHEBI:37565"/>
    </ligand>
</feature>
<name>PURA_YERPS</name>
<keyword id="KW-0963">Cytoplasm</keyword>
<keyword id="KW-0342">GTP-binding</keyword>
<keyword id="KW-0436">Ligase</keyword>
<keyword id="KW-0460">Magnesium</keyword>
<keyword id="KW-0479">Metal-binding</keyword>
<keyword id="KW-0547">Nucleotide-binding</keyword>
<keyword id="KW-0658">Purine biosynthesis</keyword>
<dbReference type="EC" id="6.3.4.4" evidence="1"/>
<dbReference type="EMBL" id="BX936398">
    <property type="protein sequence ID" value="CAH19670.1"/>
    <property type="molecule type" value="Genomic_DNA"/>
</dbReference>
<dbReference type="RefSeq" id="WP_002209157.1">
    <property type="nucleotide sequence ID" value="NZ_CP009712.1"/>
</dbReference>
<dbReference type="SMR" id="Q66FB0"/>
<dbReference type="KEGG" id="ypo:BZ17_2134"/>
<dbReference type="KEGG" id="yps:YPTB0430"/>
<dbReference type="PATRIC" id="fig|273123.14.peg.2262"/>
<dbReference type="UniPathway" id="UPA00075">
    <property type="reaction ID" value="UER00335"/>
</dbReference>
<dbReference type="Proteomes" id="UP000001011">
    <property type="component" value="Chromosome"/>
</dbReference>
<dbReference type="GO" id="GO:0005737">
    <property type="term" value="C:cytoplasm"/>
    <property type="evidence" value="ECO:0007669"/>
    <property type="project" value="UniProtKB-SubCell"/>
</dbReference>
<dbReference type="GO" id="GO:0004019">
    <property type="term" value="F:adenylosuccinate synthase activity"/>
    <property type="evidence" value="ECO:0007669"/>
    <property type="project" value="UniProtKB-UniRule"/>
</dbReference>
<dbReference type="GO" id="GO:0005525">
    <property type="term" value="F:GTP binding"/>
    <property type="evidence" value="ECO:0007669"/>
    <property type="project" value="UniProtKB-UniRule"/>
</dbReference>
<dbReference type="GO" id="GO:0000287">
    <property type="term" value="F:magnesium ion binding"/>
    <property type="evidence" value="ECO:0007669"/>
    <property type="project" value="UniProtKB-UniRule"/>
</dbReference>
<dbReference type="GO" id="GO:0044208">
    <property type="term" value="P:'de novo' AMP biosynthetic process"/>
    <property type="evidence" value="ECO:0007669"/>
    <property type="project" value="UniProtKB-UniRule"/>
</dbReference>
<dbReference type="GO" id="GO:0046040">
    <property type="term" value="P:IMP metabolic process"/>
    <property type="evidence" value="ECO:0007669"/>
    <property type="project" value="TreeGrafter"/>
</dbReference>
<dbReference type="CDD" id="cd03108">
    <property type="entry name" value="AdSS"/>
    <property type="match status" value="1"/>
</dbReference>
<dbReference type="FunFam" id="1.10.300.10:FF:000001">
    <property type="entry name" value="Adenylosuccinate synthetase"/>
    <property type="match status" value="1"/>
</dbReference>
<dbReference type="FunFam" id="3.90.170.10:FF:000001">
    <property type="entry name" value="Adenylosuccinate synthetase"/>
    <property type="match status" value="1"/>
</dbReference>
<dbReference type="Gene3D" id="3.40.440.10">
    <property type="entry name" value="Adenylosuccinate Synthetase, subunit A, domain 1"/>
    <property type="match status" value="1"/>
</dbReference>
<dbReference type="Gene3D" id="1.10.300.10">
    <property type="entry name" value="Adenylosuccinate Synthetase, subunit A, domain 2"/>
    <property type="match status" value="1"/>
</dbReference>
<dbReference type="Gene3D" id="3.90.170.10">
    <property type="entry name" value="Adenylosuccinate Synthetase, subunit A, domain 3"/>
    <property type="match status" value="1"/>
</dbReference>
<dbReference type="HAMAP" id="MF_00011">
    <property type="entry name" value="Adenylosucc_synth"/>
    <property type="match status" value="1"/>
</dbReference>
<dbReference type="InterPro" id="IPR018220">
    <property type="entry name" value="Adenylosuccin_syn_GTP-bd"/>
</dbReference>
<dbReference type="InterPro" id="IPR033128">
    <property type="entry name" value="Adenylosuccin_syn_Lys_AS"/>
</dbReference>
<dbReference type="InterPro" id="IPR042109">
    <property type="entry name" value="Adenylosuccinate_synth_dom1"/>
</dbReference>
<dbReference type="InterPro" id="IPR042110">
    <property type="entry name" value="Adenylosuccinate_synth_dom2"/>
</dbReference>
<dbReference type="InterPro" id="IPR042111">
    <property type="entry name" value="Adenylosuccinate_synth_dom3"/>
</dbReference>
<dbReference type="InterPro" id="IPR001114">
    <property type="entry name" value="Adenylosuccinate_synthetase"/>
</dbReference>
<dbReference type="InterPro" id="IPR027417">
    <property type="entry name" value="P-loop_NTPase"/>
</dbReference>
<dbReference type="NCBIfam" id="NF002223">
    <property type="entry name" value="PRK01117.1"/>
    <property type="match status" value="1"/>
</dbReference>
<dbReference type="NCBIfam" id="TIGR00184">
    <property type="entry name" value="purA"/>
    <property type="match status" value="1"/>
</dbReference>
<dbReference type="PANTHER" id="PTHR11846">
    <property type="entry name" value="ADENYLOSUCCINATE SYNTHETASE"/>
    <property type="match status" value="1"/>
</dbReference>
<dbReference type="PANTHER" id="PTHR11846:SF0">
    <property type="entry name" value="ADENYLOSUCCINATE SYNTHETASE"/>
    <property type="match status" value="1"/>
</dbReference>
<dbReference type="Pfam" id="PF00709">
    <property type="entry name" value="Adenylsucc_synt"/>
    <property type="match status" value="1"/>
</dbReference>
<dbReference type="SMART" id="SM00788">
    <property type="entry name" value="Adenylsucc_synt"/>
    <property type="match status" value="1"/>
</dbReference>
<dbReference type="SUPFAM" id="SSF52540">
    <property type="entry name" value="P-loop containing nucleoside triphosphate hydrolases"/>
    <property type="match status" value="1"/>
</dbReference>
<dbReference type="PROSITE" id="PS01266">
    <property type="entry name" value="ADENYLOSUCCIN_SYN_1"/>
    <property type="match status" value="1"/>
</dbReference>
<dbReference type="PROSITE" id="PS00513">
    <property type="entry name" value="ADENYLOSUCCIN_SYN_2"/>
    <property type="match status" value="1"/>
</dbReference>
<proteinExistence type="inferred from homology"/>
<reference key="1">
    <citation type="journal article" date="2004" name="Proc. Natl. Acad. Sci. U.S.A.">
        <title>Insights into the evolution of Yersinia pestis through whole-genome comparison with Yersinia pseudotuberculosis.</title>
        <authorList>
            <person name="Chain P.S.G."/>
            <person name="Carniel E."/>
            <person name="Larimer F.W."/>
            <person name="Lamerdin J."/>
            <person name="Stoutland P.O."/>
            <person name="Regala W.M."/>
            <person name="Georgescu A.M."/>
            <person name="Vergez L.M."/>
            <person name="Land M.L."/>
            <person name="Motin V.L."/>
            <person name="Brubaker R.R."/>
            <person name="Fowler J."/>
            <person name="Hinnebusch J."/>
            <person name="Marceau M."/>
            <person name="Medigue C."/>
            <person name="Simonet M."/>
            <person name="Chenal-Francisque V."/>
            <person name="Souza B."/>
            <person name="Dacheux D."/>
            <person name="Elliott J.M."/>
            <person name="Derbise A."/>
            <person name="Hauser L.J."/>
            <person name="Garcia E."/>
        </authorList>
    </citation>
    <scope>NUCLEOTIDE SEQUENCE [LARGE SCALE GENOMIC DNA]</scope>
    <source>
        <strain>IP32953</strain>
    </source>
</reference>
<organism>
    <name type="scientific">Yersinia pseudotuberculosis serotype I (strain IP32953)</name>
    <dbReference type="NCBI Taxonomy" id="273123"/>
    <lineage>
        <taxon>Bacteria</taxon>
        <taxon>Pseudomonadati</taxon>
        <taxon>Pseudomonadota</taxon>
        <taxon>Gammaproteobacteria</taxon>
        <taxon>Enterobacterales</taxon>
        <taxon>Yersiniaceae</taxon>
        <taxon>Yersinia</taxon>
    </lineage>
</organism>